<evidence type="ECO:0000250" key="1"/>
<evidence type="ECO:0000250" key="2">
    <source>
        <dbReference type="UniProtKB" id="P00156"/>
    </source>
</evidence>
<evidence type="ECO:0000250" key="3">
    <source>
        <dbReference type="UniProtKB" id="P00157"/>
    </source>
</evidence>
<evidence type="ECO:0000250" key="4">
    <source>
        <dbReference type="UniProtKB" id="P00163"/>
    </source>
</evidence>
<evidence type="ECO:0000255" key="5"/>
<evidence type="ECO:0000255" key="6">
    <source>
        <dbReference type="PROSITE-ProRule" id="PRU00967"/>
    </source>
</evidence>
<evidence type="ECO:0000255" key="7">
    <source>
        <dbReference type="PROSITE-ProRule" id="PRU00968"/>
    </source>
</evidence>
<evidence type="ECO:0000269" key="8">
    <source>
    </source>
</evidence>
<evidence type="ECO:0000269" key="9">
    <source>
    </source>
</evidence>
<evidence type="ECO:0000312" key="10">
    <source>
        <dbReference type="WormBase" id="MTCE.21"/>
    </source>
</evidence>
<reference key="1">
    <citation type="journal article" date="2003" name="Mol. Biol. Evol.">
        <title>Phylogenetics in Caenorhabditis elegans: an analysis of divergence and outcrossing.</title>
        <authorList>
            <person name="Denver D.R."/>
            <person name="Morris K."/>
            <person name="Thomas W.K."/>
        </authorList>
    </citation>
    <scope>NUCLEOTIDE SEQUENCE [GENOMIC DNA]</scope>
    <scope>VARIANT VAL-288</scope>
    <source>
        <strain>AB1</strain>
        <strain>AB2</strain>
        <strain>Bristol N2</strain>
        <strain>CB4852</strain>
        <strain>CB4853</strain>
        <strain>CB4854</strain>
        <strain>CB4855</strain>
        <strain>CB4856</strain>
        <strain>CB4857</strain>
        <strain>CB4858</strain>
        <strain>KR314</strain>
        <strain>PB303</strain>
        <strain>PB306</strain>
        <strain>RW7000</strain>
        <strain>TR403</strain>
    </source>
</reference>
<reference key="2">
    <citation type="journal article" date="1992" name="Genetics">
        <title>The mitochondrial genomes of two nematodes, Caenorhabditis elegans and Ascaris suum.</title>
        <authorList>
            <person name="Okimoto R."/>
            <person name="Macfarlane J.L."/>
            <person name="Clary D.O."/>
            <person name="Wolstenholme D.R."/>
        </authorList>
    </citation>
    <scope>NUCLEOTIDE SEQUENCE [LARGE SCALE GENOMIC DNA]</scope>
    <source>
        <strain>Bristol N2</strain>
    </source>
</reference>
<reference key="3">
    <citation type="journal article" date="1990" name="Nucleic Acids Res.">
        <title>Evidence for the frequent use of TTG as the translation initiation codon of mitochondrial protein genes in the nematodes, Ascaris suum and Caenorhabditis elegans.</title>
        <authorList>
            <person name="Okimoto R."/>
            <person name="Macfarlane J.L."/>
            <person name="Wolstenholme D.R."/>
        </authorList>
    </citation>
    <scope>NUCLEOTIDE SEQUENCE [GENOMIC DNA] OF 1-25</scope>
</reference>
<reference key="4">
    <citation type="journal article" date="2010" name="J. Biol. Chem.">
        <title>Mutations in mitochondrial complex III uniquely affect complex I in Caenorhabditis elegans.</title>
        <authorList>
            <person name="Suthammarak W."/>
            <person name="Morgan P.G."/>
            <person name="Sedensky M.M."/>
        </authorList>
    </citation>
    <scope>FUNCTION</scope>
    <scope>MUTAGENESIS OF ALA-170</scope>
</reference>
<proteinExistence type="evidence at protein level"/>
<accession>P24890</accession>
<comment type="function">
    <text evidence="4 9">Component of the ubiquinol-cytochrome c reductase complex (complex III or cytochrome b-c1 complex) that is part of the mitochondrial respiratory chain (PubMed:20971856). The b-c1 complex mediates electron transfer from ubiquinol to cytochrome c (By similarity). Contributes to the generation of a proton gradient across the mitochondrial membrane that is then used for ATP synthesis (PubMed:20971856).</text>
</comment>
<comment type="cofactor">
    <cofactor evidence="4">
        <name>heme b</name>
        <dbReference type="ChEBI" id="CHEBI:60344"/>
    </cofactor>
    <text evidence="4">Binds 2 heme b groups non-covalently.</text>
</comment>
<comment type="subunit">
    <text evidence="1">The main subunits of complex b-c1 are: cytochrome b, cytochrome c1 and the Rieske protein.</text>
</comment>
<comment type="subcellular location">
    <subcellularLocation>
        <location evidence="4">Mitochondrion inner membrane</location>
        <topology evidence="4">Multi-pass membrane protein</topology>
    </subcellularLocation>
</comment>
<comment type="miscellaneous">
    <text evidence="1">Heme 1 (or BL or b562) is low-potential and absorbs at about 562 nm, and heme 2 (or BH or b566) is high-potential and absorbs at about 566 nm.</text>
</comment>
<comment type="similarity">
    <text evidence="6 7">Belongs to the cytochrome b family.</text>
</comment>
<comment type="caution">
    <text evidence="4">The protein contains an even number of transmembrane helices, fewer than predicted by bioinformatics tools.</text>
</comment>
<protein>
    <recommendedName>
        <fullName>Cytochrome b</fullName>
    </recommendedName>
    <alternativeName>
        <fullName>Complex III subunit 3</fullName>
    </alternativeName>
    <alternativeName>
        <fullName>Complex III subunit III</fullName>
    </alternativeName>
    <alternativeName>
        <fullName>Cytochrome b-c1 complex subunit 3</fullName>
    </alternativeName>
    <alternativeName>
        <fullName>Ubiquinol-cytochrome-c reductase complex cytochrome b subunit</fullName>
    </alternativeName>
</protein>
<name>CYB_CAEEL</name>
<gene>
    <name evidence="10" type="primary">ctb-1</name>
    <name evidence="4" type="synonym">cob</name>
    <name evidence="10" type="synonym">cytb</name>
    <name evidence="2" type="synonym">Mtcyb</name>
    <name evidence="10" type="ORF">MTCE.21</name>
</gene>
<organism>
    <name type="scientific">Caenorhabditis elegans</name>
    <dbReference type="NCBI Taxonomy" id="6239"/>
    <lineage>
        <taxon>Eukaryota</taxon>
        <taxon>Metazoa</taxon>
        <taxon>Ecdysozoa</taxon>
        <taxon>Nematoda</taxon>
        <taxon>Chromadorea</taxon>
        <taxon>Rhabditida</taxon>
        <taxon>Rhabditina</taxon>
        <taxon>Rhabditomorpha</taxon>
        <taxon>Rhabditoidea</taxon>
        <taxon>Rhabditidae</taxon>
        <taxon>Peloderinae</taxon>
        <taxon>Caenorhabditis</taxon>
    </lineage>
</organism>
<dbReference type="EMBL" id="AY171178">
    <property type="protein sequence ID" value="AAO16430.1"/>
    <property type="molecule type" value="Genomic_DNA"/>
</dbReference>
<dbReference type="EMBL" id="AY171179">
    <property type="protein sequence ID" value="AAO16432.1"/>
    <property type="molecule type" value="Genomic_DNA"/>
</dbReference>
<dbReference type="EMBL" id="AY171180">
    <property type="protein sequence ID" value="AAO16434.1"/>
    <property type="molecule type" value="Genomic_DNA"/>
</dbReference>
<dbReference type="EMBL" id="AY171181">
    <property type="protein sequence ID" value="AAO16436.1"/>
    <property type="molecule type" value="Genomic_DNA"/>
</dbReference>
<dbReference type="EMBL" id="AY171190">
    <property type="protein sequence ID" value="AAO16454.1"/>
    <property type="molecule type" value="Genomic_DNA"/>
</dbReference>
<dbReference type="EMBL" id="AY171182">
    <property type="protein sequence ID" value="AAO16438.1"/>
    <property type="molecule type" value="Genomic_DNA"/>
</dbReference>
<dbReference type="EMBL" id="AY171183">
    <property type="protein sequence ID" value="AAO16440.1"/>
    <property type="molecule type" value="Genomic_DNA"/>
</dbReference>
<dbReference type="EMBL" id="AY171184">
    <property type="protein sequence ID" value="AAO16442.1"/>
    <property type="molecule type" value="Genomic_DNA"/>
</dbReference>
<dbReference type="EMBL" id="AY171185">
    <property type="protein sequence ID" value="AAO16444.1"/>
    <property type="molecule type" value="Genomic_DNA"/>
</dbReference>
<dbReference type="EMBL" id="AY171186">
    <property type="protein sequence ID" value="AAO16446.1"/>
    <property type="molecule type" value="Genomic_DNA"/>
</dbReference>
<dbReference type="EMBL" id="AY171187">
    <property type="protein sequence ID" value="AAO16448.1"/>
    <property type="molecule type" value="Genomic_DNA"/>
</dbReference>
<dbReference type="EMBL" id="AY171188">
    <property type="protein sequence ID" value="AAO16450.1"/>
    <property type="molecule type" value="Genomic_DNA"/>
</dbReference>
<dbReference type="EMBL" id="AY171189">
    <property type="protein sequence ID" value="AAO16452.1"/>
    <property type="molecule type" value="Genomic_DNA"/>
</dbReference>
<dbReference type="EMBL" id="AY171191">
    <property type="protein sequence ID" value="AAO16456.1"/>
    <property type="molecule type" value="Genomic_DNA"/>
</dbReference>
<dbReference type="EMBL" id="AY171192">
    <property type="protein sequence ID" value="AAO16458.1"/>
    <property type="molecule type" value="Genomic_DNA"/>
</dbReference>
<dbReference type="EMBL" id="X54252">
    <property type="protein sequence ID" value="CAA38156.1"/>
    <property type="molecule type" value="Genomic_DNA"/>
</dbReference>
<dbReference type="PIR" id="S26031">
    <property type="entry name" value="S26031"/>
</dbReference>
<dbReference type="RefSeq" id="NP_006958.1">
    <property type="nucleotide sequence ID" value="NC_001328.1"/>
</dbReference>
<dbReference type="SMR" id="P24890"/>
<dbReference type="BioGRID" id="57540">
    <property type="interactions" value="1"/>
</dbReference>
<dbReference type="FunCoup" id="P24890">
    <property type="interactions" value="117"/>
</dbReference>
<dbReference type="STRING" id="6239.MTCE.21.1"/>
<dbReference type="PaxDb" id="6239-MTCE.21"/>
<dbReference type="EnsemblMetazoa" id="MTCE.21.1">
    <property type="protein sequence ID" value="MTCE.21.1"/>
    <property type="gene ID" value="WBGene00000829"/>
</dbReference>
<dbReference type="GeneID" id="2565702"/>
<dbReference type="KEGG" id="cel:KEF34_p07"/>
<dbReference type="AGR" id="WB:WBGene00000829"/>
<dbReference type="CTD" id="4519"/>
<dbReference type="WormBase" id="MTCE.21">
    <property type="protein sequence ID" value="CE35348"/>
    <property type="gene ID" value="WBGene00000829"/>
    <property type="gene designation" value="ctb-1"/>
</dbReference>
<dbReference type="eggNOG" id="KOG4663">
    <property type="taxonomic scope" value="Eukaryota"/>
</dbReference>
<dbReference type="GeneTree" id="ENSGT00390000017948"/>
<dbReference type="HOGENOM" id="CLU_031114_3_0_1"/>
<dbReference type="InParanoid" id="P24890"/>
<dbReference type="PhylomeDB" id="P24890"/>
<dbReference type="Reactome" id="R-CEL-611105">
    <property type="pathway name" value="Respiratory electron transport"/>
</dbReference>
<dbReference type="Reactome" id="R-CEL-9865881">
    <property type="pathway name" value="Complex III assembly"/>
</dbReference>
<dbReference type="PRO" id="PR:P24890"/>
<dbReference type="Proteomes" id="UP000001940">
    <property type="component" value="Mitochondrion"/>
</dbReference>
<dbReference type="Bgee" id="WBGene00000829">
    <property type="expression patterns" value="Expressed in pharyngeal muscle cell (C elegans) and 4 other cell types or tissues"/>
</dbReference>
<dbReference type="GO" id="GO:0016020">
    <property type="term" value="C:membrane"/>
    <property type="evidence" value="ECO:0000318"/>
    <property type="project" value="GO_Central"/>
</dbReference>
<dbReference type="GO" id="GO:0005743">
    <property type="term" value="C:mitochondrial inner membrane"/>
    <property type="evidence" value="ECO:0007669"/>
    <property type="project" value="UniProtKB-SubCell"/>
</dbReference>
<dbReference type="GO" id="GO:0045275">
    <property type="term" value="C:respiratory chain complex III"/>
    <property type="evidence" value="ECO:0000318"/>
    <property type="project" value="GO_Central"/>
</dbReference>
<dbReference type="GO" id="GO:0009055">
    <property type="term" value="F:electron transfer activity"/>
    <property type="evidence" value="ECO:0007669"/>
    <property type="project" value="InterPro"/>
</dbReference>
<dbReference type="GO" id="GO:0046872">
    <property type="term" value="F:metal ion binding"/>
    <property type="evidence" value="ECO:0007669"/>
    <property type="project" value="UniProtKB-KW"/>
</dbReference>
<dbReference type="GO" id="GO:0016491">
    <property type="term" value="F:oxidoreductase activity"/>
    <property type="evidence" value="ECO:0007669"/>
    <property type="project" value="InterPro"/>
</dbReference>
<dbReference type="GO" id="GO:0006122">
    <property type="term" value="P:mitochondrial electron transport, ubiquinol to cytochrome c"/>
    <property type="evidence" value="ECO:0000318"/>
    <property type="project" value="GO_Central"/>
</dbReference>
<dbReference type="GO" id="GO:1902600">
    <property type="term" value="P:proton transmembrane transport"/>
    <property type="evidence" value="ECO:0007669"/>
    <property type="project" value="GOC"/>
</dbReference>
<dbReference type="CDD" id="cd00284">
    <property type="entry name" value="Cytochrome_b_N"/>
    <property type="match status" value="1"/>
</dbReference>
<dbReference type="Gene3D" id="1.20.810.10">
    <property type="entry name" value="Cytochrome Bc1 Complex, Chain C"/>
    <property type="match status" value="1"/>
</dbReference>
<dbReference type="InterPro" id="IPR005798">
    <property type="entry name" value="Cyt_b/b6_C"/>
</dbReference>
<dbReference type="InterPro" id="IPR036150">
    <property type="entry name" value="Cyt_b/b6_C_sf"/>
</dbReference>
<dbReference type="InterPro" id="IPR005797">
    <property type="entry name" value="Cyt_b/b6_N"/>
</dbReference>
<dbReference type="InterPro" id="IPR027387">
    <property type="entry name" value="Cytb/b6-like_sf"/>
</dbReference>
<dbReference type="InterPro" id="IPR048259">
    <property type="entry name" value="Cytochrome_b_N_euk/bac"/>
</dbReference>
<dbReference type="InterPro" id="IPR016174">
    <property type="entry name" value="Di-haem_cyt_TM"/>
</dbReference>
<dbReference type="PANTHER" id="PTHR19271">
    <property type="entry name" value="CYTOCHROME B"/>
    <property type="match status" value="1"/>
</dbReference>
<dbReference type="PANTHER" id="PTHR19271:SF16">
    <property type="entry name" value="CYTOCHROME B"/>
    <property type="match status" value="1"/>
</dbReference>
<dbReference type="Pfam" id="PF00032">
    <property type="entry name" value="Cytochrom_B_C"/>
    <property type="match status" value="1"/>
</dbReference>
<dbReference type="Pfam" id="PF00033">
    <property type="entry name" value="Cytochrome_B"/>
    <property type="match status" value="1"/>
</dbReference>
<dbReference type="SUPFAM" id="SSF81648">
    <property type="entry name" value="a domain/subunit of cytochrome bc1 complex (Ubiquinol-cytochrome c reductase)"/>
    <property type="match status" value="1"/>
</dbReference>
<dbReference type="SUPFAM" id="SSF81342">
    <property type="entry name" value="Transmembrane di-heme cytochromes"/>
    <property type="match status" value="1"/>
</dbReference>
<dbReference type="PROSITE" id="PS51003">
    <property type="entry name" value="CYTB_CTER"/>
    <property type="match status" value="1"/>
</dbReference>
<dbReference type="PROSITE" id="PS51002">
    <property type="entry name" value="CYTB_NTER"/>
    <property type="match status" value="1"/>
</dbReference>
<feature type="chain" id="PRO_0000060703" description="Cytochrome b">
    <location>
        <begin position="1"/>
        <end position="370"/>
    </location>
</feature>
<feature type="transmembrane region" description="Helical" evidence="4">
    <location>
        <begin position="30"/>
        <end position="50"/>
    </location>
</feature>
<feature type="transmembrane region" description="Helical" evidence="4">
    <location>
        <begin position="74"/>
        <end position="96"/>
    </location>
</feature>
<feature type="transmembrane region" description="Helical" evidence="4">
    <location>
        <begin position="109"/>
        <end position="129"/>
    </location>
</feature>
<feature type="transmembrane region" description="Helical" evidence="4">
    <location>
        <begin position="175"/>
        <end position="195"/>
    </location>
</feature>
<feature type="transmembrane region" description="Helical" evidence="4">
    <location>
        <begin position="221"/>
        <end position="240"/>
    </location>
</feature>
<feature type="transmembrane region" description="Helical" evidence="5">
    <location>
        <begin position="284"/>
        <end position="304"/>
    </location>
</feature>
<feature type="transmembrane region" description="Helical" evidence="5">
    <location>
        <begin position="316"/>
        <end position="336"/>
    </location>
</feature>
<feature type="transmembrane region" description="Helical" evidence="5">
    <location>
        <begin position="342"/>
        <end position="362"/>
    </location>
</feature>
<feature type="binding site" description="axial binding residue" evidence="4">
    <location>
        <position position="80"/>
    </location>
    <ligand>
        <name>heme b</name>
        <dbReference type="ChEBI" id="CHEBI:60344"/>
        <label>b562</label>
    </ligand>
    <ligandPart>
        <name>Fe</name>
        <dbReference type="ChEBI" id="CHEBI:18248"/>
    </ligandPart>
</feature>
<feature type="binding site" description="axial binding residue" evidence="4">
    <location>
        <position position="94"/>
    </location>
    <ligand>
        <name>heme b</name>
        <dbReference type="ChEBI" id="CHEBI:60344"/>
        <label>b566</label>
    </ligand>
    <ligandPart>
        <name>Fe</name>
        <dbReference type="ChEBI" id="CHEBI:18248"/>
    </ligandPart>
</feature>
<feature type="binding site" description="axial binding residue" evidence="4">
    <location>
        <position position="179"/>
    </location>
    <ligand>
        <name>heme b</name>
        <dbReference type="ChEBI" id="CHEBI:60344"/>
        <label>b562</label>
    </ligand>
    <ligandPart>
        <name>Fe</name>
        <dbReference type="ChEBI" id="CHEBI:18248"/>
    </ligandPart>
</feature>
<feature type="binding site" description="axial binding residue" evidence="4">
    <location>
        <position position="193"/>
    </location>
    <ligand>
        <name>heme b</name>
        <dbReference type="ChEBI" id="CHEBI:60344"/>
        <label>b566</label>
    </ligand>
    <ligandPart>
        <name>Fe</name>
        <dbReference type="ChEBI" id="CHEBI:18248"/>
    </ligandPart>
</feature>
<feature type="binding site" evidence="3">
    <location>
        <position position="198"/>
    </location>
    <ligand>
        <name>a ubiquinone</name>
        <dbReference type="ChEBI" id="CHEBI:16389"/>
    </ligand>
</feature>
<feature type="sequence variant" description="In strain: AB1, AB2, CB4852, CB4853, CB4855, CB4857, CB4858, KR314 and PB306." evidence="8">
    <original>I</original>
    <variation>V</variation>
    <location>
        <position position="288"/>
    </location>
</feature>
<feature type="mutagenesis site" description="In qm189; normal complex III assembly, but a decrease in complex activity." evidence="9">
    <original>A</original>
    <variation>V</variation>
    <location>
        <position position="170"/>
    </location>
</feature>
<sequence>MKINNSLLNFVNGMLVTLPSSKTLTLSWNFGSMLGMVLIFQILTGTFLAFYYTPDSLMAFSTVQYIMYEVNFGWVFRIFHFNGASLFFIFLYLHIFKGLFFMSYRLKKVWMSGLTIYLLVMMEAFMGYVLVWAQMSFWAAVVITSLLSVIPIWGPTIVTWIWSGFGVTGATLKFFFVLHFLLPWAILVIVLGHLIFLHSTGSTSSLYCHGDYDKVCFSPEYLGKDAYNIVIWLLFIVLSLIYPFNLGDAEMFIEADPMMSPVHIVPEWYFLFAYAILRAIPNKVLGVIALLMSIVTFYFFALVNNYTSCLTKLNKFLVFMFIISSTILSWLGQCTVEDPFTILSPLFSFIYFGLAYLMLFIFMSSKLLFK</sequence>
<geneLocation type="mitochondrion"/>
<keyword id="KW-0249">Electron transport</keyword>
<keyword id="KW-0349">Heme</keyword>
<keyword id="KW-0408">Iron</keyword>
<keyword id="KW-0472">Membrane</keyword>
<keyword id="KW-0479">Metal-binding</keyword>
<keyword id="KW-0496">Mitochondrion</keyword>
<keyword id="KW-0999">Mitochondrion inner membrane</keyword>
<keyword id="KW-1185">Reference proteome</keyword>
<keyword id="KW-0679">Respiratory chain</keyword>
<keyword id="KW-0812">Transmembrane</keyword>
<keyword id="KW-1133">Transmembrane helix</keyword>
<keyword id="KW-0813">Transport</keyword>
<keyword id="KW-0830">Ubiquinone</keyword>